<comment type="function">
    <text evidence="1">Probable biotin transporter.</text>
</comment>
<comment type="subcellular location">
    <subcellularLocation>
        <location evidence="3">Cell membrane</location>
        <topology evidence="3">Multi-pass membrane protein</topology>
    </subcellularLocation>
</comment>
<comment type="similarity">
    <text evidence="3">Belongs to the BioY family.</text>
</comment>
<gene>
    <name type="primary">bioY</name>
    <name type="ordered locus">PH0159</name>
</gene>
<accession>O57898</accession>
<protein>
    <recommendedName>
        <fullName>Probable biotin transporter BioY</fullName>
    </recommendedName>
</protein>
<proteinExistence type="inferred from homology"/>
<name>BIOY_PYRHO</name>
<sequence>MKAKEVSLVALFVALTSVGAQISVSIGPVPLTLQVFFVILAGLVLGPKLGFLSILIYDILGALGIPVFAGFSGGIAHILGPTGGYIIAFPIATFIAGLGRGKVRYLTSLMGLLVIYLIGWMWLARFVGFNKAFILGVLPFIVPDIVKAATAVIIAERLQGNT</sequence>
<feature type="chain" id="PRO_0000144149" description="Probable biotin transporter BioY">
    <location>
        <begin position="1"/>
        <end position="162"/>
    </location>
</feature>
<feature type="transmembrane region" description="Helical" evidence="2">
    <location>
        <begin position="6"/>
        <end position="26"/>
    </location>
</feature>
<feature type="transmembrane region" description="Helical" evidence="2">
    <location>
        <begin position="59"/>
        <end position="79"/>
    </location>
</feature>
<feature type="transmembrane region" description="Helical" evidence="2">
    <location>
        <begin position="81"/>
        <end position="101"/>
    </location>
</feature>
<feature type="transmembrane region" description="Helical" evidence="2">
    <location>
        <begin position="109"/>
        <end position="129"/>
    </location>
</feature>
<feature type="transmembrane region" description="Helical" evidence="2">
    <location>
        <begin position="134"/>
        <end position="154"/>
    </location>
</feature>
<evidence type="ECO:0000250" key="1"/>
<evidence type="ECO:0000255" key="2"/>
<evidence type="ECO:0000305" key="3"/>
<organism>
    <name type="scientific">Pyrococcus horikoshii (strain ATCC 700860 / DSM 12428 / JCM 9974 / NBRC 100139 / OT-3)</name>
    <dbReference type="NCBI Taxonomy" id="70601"/>
    <lineage>
        <taxon>Archaea</taxon>
        <taxon>Methanobacteriati</taxon>
        <taxon>Methanobacteriota</taxon>
        <taxon>Thermococci</taxon>
        <taxon>Thermococcales</taxon>
        <taxon>Thermococcaceae</taxon>
        <taxon>Pyrococcus</taxon>
    </lineage>
</organism>
<dbReference type="EMBL" id="BA000001">
    <property type="protein sequence ID" value="BAA29228.1"/>
    <property type="molecule type" value="Genomic_DNA"/>
</dbReference>
<dbReference type="PIR" id="E71237">
    <property type="entry name" value="E71237"/>
</dbReference>
<dbReference type="RefSeq" id="WP_010884269.1">
    <property type="nucleotide sequence ID" value="NC_000961.1"/>
</dbReference>
<dbReference type="SMR" id="O57898"/>
<dbReference type="STRING" id="70601.gene:9377069"/>
<dbReference type="EnsemblBacteria" id="BAA29228">
    <property type="protein sequence ID" value="BAA29228"/>
    <property type="gene ID" value="BAA29228"/>
</dbReference>
<dbReference type="GeneID" id="1444051"/>
<dbReference type="KEGG" id="pho:PH0159"/>
<dbReference type="eggNOG" id="arCOG02986">
    <property type="taxonomic scope" value="Archaea"/>
</dbReference>
<dbReference type="OrthoDB" id="50443at2157"/>
<dbReference type="Proteomes" id="UP000000752">
    <property type="component" value="Chromosome"/>
</dbReference>
<dbReference type="GO" id="GO:0005886">
    <property type="term" value="C:plasma membrane"/>
    <property type="evidence" value="ECO:0007669"/>
    <property type="project" value="UniProtKB-SubCell"/>
</dbReference>
<dbReference type="GO" id="GO:0015225">
    <property type="term" value="F:biotin transmembrane transporter activity"/>
    <property type="evidence" value="ECO:0007669"/>
    <property type="project" value="InterPro"/>
</dbReference>
<dbReference type="Gene3D" id="1.10.1760.20">
    <property type="match status" value="1"/>
</dbReference>
<dbReference type="InterPro" id="IPR003784">
    <property type="entry name" value="BioY"/>
</dbReference>
<dbReference type="PANTHER" id="PTHR34295">
    <property type="entry name" value="BIOTIN TRANSPORTER BIOY"/>
    <property type="match status" value="1"/>
</dbReference>
<dbReference type="PANTHER" id="PTHR34295:SF1">
    <property type="entry name" value="BIOTIN TRANSPORTER BIOY"/>
    <property type="match status" value="1"/>
</dbReference>
<dbReference type="Pfam" id="PF02632">
    <property type="entry name" value="BioY"/>
    <property type="match status" value="1"/>
</dbReference>
<dbReference type="PIRSF" id="PIRSF016661">
    <property type="entry name" value="BioY"/>
    <property type="match status" value="1"/>
</dbReference>
<reference key="1">
    <citation type="journal article" date="1998" name="DNA Res.">
        <title>Complete sequence and gene organization of the genome of a hyper-thermophilic archaebacterium, Pyrococcus horikoshii OT3.</title>
        <authorList>
            <person name="Kawarabayasi Y."/>
            <person name="Sawada M."/>
            <person name="Horikawa H."/>
            <person name="Haikawa Y."/>
            <person name="Hino Y."/>
            <person name="Yamamoto S."/>
            <person name="Sekine M."/>
            <person name="Baba S."/>
            <person name="Kosugi H."/>
            <person name="Hosoyama A."/>
            <person name="Nagai Y."/>
            <person name="Sakai M."/>
            <person name="Ogura K."/>
            <person name="Otsuka R."/>
            <person name="Nakazawa H."/>
            <person name="Takamiya M."/>
            <person name="Ohfuku Y."/>
            <person name="Funahashi T."/>
            <person name="Tanaka T."/>
            <person name="Kudoh Y."/>
            <person name="Yamazaki J."/>
            <person name="Kushida N."/>
            <person name="Oguchi A."/>
            <person name="Aoki K."/>
            <person name="Yoshizawa T."/>
            <person name="Nakamura Y."/>
            <person name="Robb F.T."/>
            <person name="Horikoshi K."/>
            <person name="Masuchi Y."/>
            <person name="Shizuya H."/>
            <person name="Kikuchi H."/>
        </authorList>
    </citation>
    <scope>NUCLEOTIDE SEQUENCE [LARGE SCALE GENOMIC DNA]</scope>
    <source>
        <strain>ATCC 700860 / DSM 12428 / JCM 9974 / NBRC 100139 / OT-3</strain>
    </source>
</reference>
<keyword id="KW-1003">Cell membrane</keyword>
<keyword id="KW-0472">Membrane</keyword>
<keyword id="KW-0812">Transmembrane</keyword>
<keyword id="KW-1133">Transmembrane helix</keyword>
<keyword id="KW-0813">Transport</keyword>